<reference key="1">
    <citation type="journal article" date="2014" name="Stand. Genomic Sci.">
        <title>Complete genome sequence of Burkholderia phymatum STM815(T), a broad host range and efficient nitrogen-fixing symbiont of Mimosa species.</title>
        <authorList>
            <person name="Moulin L."/>
            <person name="Klonowska A."/>
            <person name="Caroline B."/>
            <person name="Booth K."/>
            <person name="Vriezen J.A."/>
            <person name="Melkonian R."/>
            <person name="James E.K."/>
            <person name="Young J.P."/>
            <person name="Bena G."/>
            <person name="Hauser L."/>
            <person name="Land M."/>
            <person name="Kyrpides N."/>
            <person name="Bruce D."/>
            <person name="Chain P."/>
            <person name="Copeland A."/>
            <person name="Pitluck S."/>
            <person name="Woyke T."/>
            <person name="Lizotte-Waniewski M."/>
            <person name="Bristow J."/>
            <person name="Riley M."/>
        </authorList>
    </citation>
    <scope>NUCLEOTIDE SEQUENCE [LARGE SCALE GENOMIC DNA]</scope>
    <source>
        <strain>DSM 17167 / CIP 108236 / LMG 21445 / STM815</strain>
    </source>
</reference>
<sequence length="232" mass="25448">MTNADPHELQKFSDLAHRWWDPNAEFKPLHELNPVRLKWIDSHAHLTGKRVLDIGCGGGILSESMATLGADVKGIDLSNEALGVADLHSLESGVTVNYEEIAAETLAAREPASFDVATCMEMLEHVPDPSKVVEACKTLVKPGGWVFFSTLNRNVKSYLFAVIGAEYVARMLPKGTHDYARFIRPSELAGFARAAGLLTADIKGITYNPLTRDFGLSSDTDVNYMLACRREA</sequence>
<proteinExistence type="inferred from homology"/>
<dbReference type="EC" id="2.1.1.222" evidence="1"/>
<dbReference type="EC" id="2.1.1.64" evidence="1"/>
<dbReference type="EMBL" id="CP001043">
    <property type="protein sequence ID" value="ACC69925.1"/>
    <property type="molecule type" value="Genomic_DNA"/>
</dbReference>
<dbReference type="RefSeq" id="WP_012400145.1">
    <property type="nucleotide sequence ID" value="NC_010622.1"/>
</dbReference>
<dbReference type="SMR" id="B2JEZ6"/>
<dbReference type="STRING" id="391038.Bphy_0736"/>
<dbReference type="KEGG" id="bph:Bphy_0736"/>
<dbReference type="eggNOG" id="COG2227">
    <property type="taxonomic scope" value="Bacteria"/>
</dbReference>
<dbReference type="HOGENOM" id="CLU_042432_5_0_4"/>
<dbReference type="OrthoDB" id="9801538at2"/>
<dbReference type="UniPathway" id="UPA00232"/>
<dbReference type="Proteomes" id="UP000001192">
    <property type="component" value="Chromosome 1"/>
</dbReference>
<dbReference type="GO" id="GO:0102208">
    <property type="term" value="F:2-polyprenyl-6-hydroxyphenol methylase activity"/>
    <property type="evidence" value="ECO:0007669"/>
    <property type="project" value="UniProtKB-EC"/>
</dbReference>
<dbReference type="GO" id="GO:0061542">
    <property type="term" value="F:3-demethylubiquinol 3-O-methyltransferase activity"/>
    <property type="evidence" value="ECO:0007669"/>
    <property type="project" value="UniProtKB-UniRule"/>
</dbReference>
<dbReference type="GO" id="GO:0010420">
    <property type="term" value="F:polyprenyldihydroxybenzoate methyltransferase activity"/>
    <property type="evidence" value="ECO:0007669"/>
    <property type="project" value="InterPro"/>
</dbReference>
<dbReference type="GO" id="GO:0032259">
    <property type="term" value="P:methylation"/>
    <property type="evidence" value="ECO:0007669"/>
    <property type="project" value="UniProtKB-KW"/>
</dbReference>
<dbReference type="CDD" id="cd02440">
    <property type="entry name" value="AdoMet_MTases"/>
    <property type="match status" value="1"/>
</dbReference>
<dbReference type="FunFam" id="3.40.50.150:FF:000028">
    <property type="entry name" value="Ubiquinone biosynthesis O-methyltransferase"/>
    <property type="match status" value="1"/>
</dbReference>
<dbReference type="Gene3D" id="3.40.50.150">
    <property type="entry name" value="Vaccinia Virus protein VP39"/>
    <property type="match status" value="1"/>
</dbReference>
<dbReference type="HAMAP" id="MF_00472">
    <property type="entry name" value="UbiG"/>
    <property type="match status" value="1"/>
</dbReference>
<dbReference type="InterPro" id="IPR029063">
    <property type="entry name" value="SAM-dependent_MTases_sf"/>
</dbReference>
<dbReference type="InterPro" id="IPR010233">
    <property type="entry name" value="UbiG_MeTrfase"/>
</dbReference>
<dbReference type="NCBIfam" id="TIGR01983">
    <property type="entry name" value="UbiG"/>
    <property type="match status" value="1"/>
</dbReference>
<dbReference type="PANTHER" id="PTHR43464">
    <property type="entry name" value="METHYLTRANSFERASE"/>
    <property type="match status" value="1"/>
</dbReference>
<dbReference type="PANTHER" id="PTHR43464:SF19">
    <property type="entry name" value="UBIQUINONE BIOSYNTHESIS O-METHYLTRANSFERASE, MITOCHONDRIAL"/>
    <property type="match status" value="1"/>
</dbReference>
<dbReference type="Pfam" id="PF13489">
    <property type="entry name" value="Methyltransf_23"/>
    <property type="match status" value="1"/>
</dbReference>
<dbReference type="SUPFAM" id="SSF53335">
    <property type="entry name" value="S-adenosyl-L-methionine-dependent methyltransferases"/>
    <property type="match status" value="1"/>
</dbReference>
<name>UBIG_PARP8</name>
<gene>
    <name evidence="1" type="primary">ubiG</name>
    <name type="ordered locus">Bphy_0736</name>
</gene>
<feature type="chain" id="PRO_1000199673" description="Ubiquinone biosynthesis O-methyltransferase">
    <location>
        <begin position="1"/>
        <end position="232"/>
    </location>
</feature>
<feature type="binding site" evidence="1">
    <location>
        <position position="36"/>
    </location>
    <ligand>
        <name>S-adenosyl-L-methionine</name>
        <dbReference type="ChEBI" id="CHEBI:59789"/>
    </ligand>
</feature>
<feature type="binding site" evidence="1">
    <location>
        <position position="55"/>
    </location>
    <ligand>
        <name>S-adenosyl-L-methionine</name>
        <dbReference type="ChEBI" id="CHEBI:59789"/>
    </ligand>
</feature>
<feature type="binding site" evidence="1">
    <location>
        <position position="76"/>
    </location>
    <ligand>
        <name>S-adenosyl-L-methionine</name>
        <dbReference type="ChEBI" id="CHEBI:59789"/>
    </ligand>
</feature>
<feature type="binding site" evidence="1">
    <location>
        <position position="120"/>
    </location>
    <ligand>
        <name>S-adenosyl-L-methionine</name>
        <dbReference type="ChEBI" id="CHEBI:59789"/>
    </ligand>
</feature>
<comment type="function">
    <text evidence="1">O-methyltransferase that catalyzes the 2 O-methylation steps in the ubiquinone biosynthetic pathway.</text>
</comment>
<comment type="catalytic activity">
    <reaction evidence="1">
        <text>a 3-demethylubiquinol + S-adenosyl-L-methionine = a ubiquinol + S-adenosyl-L-homocysteine + H(+)</text>
        <dbReference type="Rhea" id="RHEA:44380"/>
        <dbReference type="Rhea" id="RHEA-COMP:9566"/>
        <dbReference type="Rhea" id="RHEA-COMP:10914"/>
        <dbReference type="ChEBI" id="CHEBI:15378"/>
        <dbReference type="ChEBI" id="CHEBI:17976"/>
        <dbReference type="ChEBI" id="CHEBI:57856"/>
        <dbReference type="ChEBI" id="CHEBI:59789"/>
        <dbReference type="ChEBI" id="CHEBI:84422"/>
        <dbReference type="EC" id="2.1.1.64"/>
    </reaction>
</comment>
<comment type="catalytic activity">
    <reaction evidence="1">
        <text>a 3-(all-trans-polyprenyl)benzene-1,2-diol + S-adenosyl-L-methionine = a 2-methoxy-6-(all-trans-polyprenyl)phenol + S-adenosyl-L-homocysteine + H(+)</text>
        <dbReference type="Rhea" id="RHEA:31411"/>
        <dbReference type="Rhea" id="RHEA-COMP:9550"/>
        <dbReference type="Rhea" id="RHEA-COMP:9551"/>
        <dbReference type="ChEBI" id="CHEBI:15378"/>
        <dbReference type="ChEBI" id="CHEBI:57856"/>
        <dbReference type="ChEBI" id="CHEBI:59789"/>
        <dbReference type="ChEBI" id="CHEBI:62729"/>
        <dbReference type="ChEBI" id="CHEBI:62731"/>
        <dbReference type="EC" id="2.1.1.222"/>
    </reaction>
</comment>
<comment type="pathway">
    <text evidence="1">Cofactor biosynthesis; ubiquinone biosynthesis.</text>
</comment>
<comment type="similarity">
    <text evidence="1">Belongs to the methyltransferase superfamily. UbiG/COQ3 family.</text>
</comment>
<keyword id="KW-0489">Methyltransferase</keyword>
<keyword id="KW-1185">Reference proteome</keyword>
<keyword id="KW-0949">S-adenosyl-L-methionine</keyword>
<keyword id="KW-0808">Transferase</keyword>
<keyword id="KW-0831">Ubiquinone biosynthesis</keyword>
<organism>
    <name type="scientific">Paraburkholderia phymatum (strain DSM 17167 / CIP 108236 / LMG 21445 / STM815)</name>
    <name type="common">Burkholderia phymatum</name>
    <dbReference type="NCBI Taxonomy" id="391038"/>
    <lineage>
        <taxon>Bacteria</taxon>
        <taxon>Pseudomonadati</taxon>
        <taxon>Pseudomonadota</taxon>
        <taxon>Betaproteobacteria</taxon>
        <taxon>Burkholderiales</taxon>
        <taxon>Burkholderiaceae</taxon>
        <taxon>Paraburkholderia</taxon>
    </lineage>
</organism>
<evidence type="ECO:0000255" key="1">
    <source>
        <dbReference type="HAMAP-Rule" id="MF_00472"/>
    </source>
</evidence>
<protein>
    <recommendedName>
        <fullName evidence="1">Ubiquinone biosynthesis O-methyltransferase</fullName>
    </recommendedName>
    <alternativeName>
        <fullName evidence="1">2-polyprenyl-6-hydroxyphenol methylase</fullName>
        <ecNumber evidence="1">2.1.1.222</ecNumber>
    </alternativeName>
    <alternativeName>
        <fullName evidence="1">3-demethylubiquinone 3-O-methyltransferase</fullName>
        <ecNumber evidence="1">2.1.1.64</ecNumber>
    </alternativeName>
</protein>
<accession>B2JEZ6</accession>